<gene>
    <name evidence="1" type="primary">rpoB</name>
    <name type="ordered locus">BL1205</name>
</gene>
<proteinExistence type="inferred from homology"/>
<keyword id="KW-0240">DNA-directed RNA polymerase</keyword>
<keyword id="KW-0548">Nucleotidyltransferase</keyword>
<keyword id="KW-1185">Reference proteome</keyword>
<keyword id="KW-0804">Transcription</keyword>
<keyword id="KW-0808">Transferase</keyword>
<reference key="1">
    <citation type="journal article" date="2002" name="Proc. Natl. Acad. Sci. U.S.A.">
        <title>The genome sequence of Bifidobacterium longum reflects its adaptation to the human gastrointestinal tract.</title>
        <authorList>
            <person name="Schell M.A."/>
            <person name="Karmirantzou M."/>
            <person name="Snel B."/>
            <person name="Vilanova D."/>
            <person name="Berger B."/>
            <person name="Pessi G."/>
            <person name="Zwahlen M.-C."/>
            <person name="Desiere F."/>
            <person name="Bork P."/>
            <person name="Delley M."/>
            <person name="Pridmore R.D."/>
            <person name="Arigoni F."/>
        </authorList>
    </citation>
    <scope>NUCLEOTIDE SEQUENCE [LARGE SCALE GENOMIC DNA]</scope>
    <source>
        <strain>NCC 2705</strain>
    </source>
</reference>
<name>RPOB_BIFLO</name>
<accession>Q8G514</accession>
<evidence type="ECO:0000255" key="1">
    <source>
        <dbReference type="HAMAP-Rule" id="MF_01321"/>
    </source>
</evidence>
<evidence type="ECO:0000256" key="2">
    <source>
        <dbReference type="SAM" id="MobiDB-lite"/>
    </source>
</evidence>
<feature type="chain" id="PRO_0000047864" description="DNA-directed RNA polymerase subunit beta">
    <location>
        <begin position="1"/>
        <end position="1187"/>
    </location>
</feature>
<feature type="region of interest" description="Disordered" evidence="2">
    <location>
        <begin position="1150"/>
        <end position="1187"/>
    </location>
</feature>
<feature type="compositionally biased region" description="Basic and acidic residues" evidence="2">
    <location>
        <begin position="1173"/>
        <end position="1187"/>
    </location>
</feature>
<organism>
    <name type="scientific">Bifidobacterium longum (strain NCC 2705)</name>
    <dbReference type="NCBI Taxonomy" id="206672"/>
    <lineage>
        <taxon>Bacteria</taxon>
        <taxon>Bacillati</taxon>
        <taxon>Actinomycetota</taxon>
        <taxon>Actinomycetes</taxon>
        <taxon>Bifidobacteriales</taxon>
        <taxon>Bifidobacteriaceae</taxon>
        <taxon>Bifidobacterium</taxon>
    </lineage>
</organism>
<comment type="function">
    <text evidence="1">DNA-dependent RNA polymerase catalyzes the transcription of DNA into RNA using the four ribonucleoside triphosphates as substrates.</text>
</comment>
<comment type="catalytic activity">
    <reaction evidence="1">
        <text>RNA(n) + a ribonucleoside 5'-triphosphate = RNA(n+1) + diphosphate</text>
        <dbReference type="Rhea" id="RHEA:21248"/>
        <dbReference type="Rhea" id="RHEA-COMP:14527"/>
        <dbReference type="Rhea" id="RHEA-COMP:17342"/>
        <dbReference type="ChEBI" id="CHEBI:33019"/>
        <dbReference type="ChEBI" id="CHEBI:61557"/>
        <dbReference type="ChEBI" id="CHEBI:140395"/>
        <dbReference type="EC" id="2.7.7.6"/>
    </reaction>
</comment>
<comment type="subunit">
    <text evidence="1">The RNAP catalytic core consists of 2 alpha, 1 beta, 1 beta' and 1 omega subunit. When a sigma factor is associated with the core the holoenzyme is formed, which can initiate transcription.</text>
</comment>
<comment type="similarity">
    <text evidence="1">Belongs to the RNA polymerase beta chain family.</text>
</comment>
<sequence>MATESTTNTTTIIARADQHDIDLHKASDRVNFGSIKEPIDVPYLLGVQTDSFDWLIGNERWKARVEEDEKNGTNTVAHTSGLDEVFNEISPIENFAQTMSLTFSDPYFEEPRHTVQECKEKDYTYSAPLYVNAEFENGDTGEIKSQTVFMGDFPLQTPHGTFIIGGTERVIVSQLVRSPGVYFDRQQDRTSDKEVFGAKIIPSRGAWLEFEIDKKDQPQVRVDRKRKQSAIVFLMAIGMTKSEIAQAFKDYPLVLDALEKETLETQDEALVDLYRKIRPADTPTPEAGKNLLDSFYFNTKRYDLARVGRYKINRKLGVEADFNDRSLHQEDIIATIKYLVALHDGAATFPGKRNGEDVDLRVDVDDIDHFGNRRIRQVGELIQNQLRTGLSRMERVVRERMTTQDAEAITPQSLINIRPVNATIKEFFGTSQLSQFMDQNNPLSGVTNKRRLSALGPGGLSRDRASMEVRDVHPSHFGRMCPIESPEGPNIGLIGSLATFGRVNPFGFIETPYRKVVNGHVTDEVEYMTADRDLDHVIAQANQELDENGNFVQKSALARVGEEEAVDVPVSSVDYMDVSPRQMVSLGASLIPFLEHDEGHRALMGTNMQRQAVPLIESERPLVGTGSEWRAANDSGDVIKSEKDGVVTYVSADLIRVMNDDGTTSSYKLAKFQRSNQTTCYNQRPIVHDGERVEAGSVMADGPAIQNGDLALGKNLLIAFMPWNGYNYEDAVIISQRLVQDDTLSSIHIEEYEIDARETKLGAEEITRDLPNVGEDAVANLDERGIIRIGAEVEAGDILVGKVTPKGETELTPEERLLRAIFGEKSREVRDTSLRVPHGETGTVIGVKEITREDAEEDGDELPNGVNQMIRVYIAQHRKITVGDKLSGRHGNKGCISRILPEEDMPFLADGTPVDIMLNPLGVPSRMNLGQVLELHLGWIAHSGWDISLDPNLEAEWKKLIPSGAEKAEPNTPVATPVFDGVKPEVLKGLLSTTLPNRDGDRLVGPDGKATLFDGRTGEPYTKPISVGYMYMLKLHHLVDDKIHARSTGPYSMITQQPLGGKAQFGGQRFGEMEVWALEAYGAAYTLHEMMTTKSDDVDGRVRVYGAIVKGDNLPPAGIPESFKVLLKEMQSLSLNVEVLNAEGVAIDMKDEDDDPASSADDLGFNIGARPDAAAKEDQKAEEPEYQ</sequence>
<protein>
    <recommendedName>
        <fullName evidence="1">DNA-directed RNA polymerase subunit beta</fullName>
        <shortName evidence="1">RNAP subunit beta</shortName>
        <ecNumber evidence="1">2.7.7.6</ecNumber>
    </recommendedName>
    <alternativeName>
        <fullName evidence="1">RNA polymerase subunit beta</fullName>
    </alternativeName>
    <alternativeName>
        <fullName evidence="1">Transcriptase subunit beta</fullName>
    </alternativeName>
</protein>
<dbReference type="EC" id="2.7.7.6" evidence="1"/>
<dbReference type="EMBL" id="AE014295">
    <property type="protein sequence ID" value="AAN25011.1"/>
    <property type="molecule type" value="Genomic_DNA"/>
</dbReference>
<dbReference type="RefSeq" id="NP_696375.1">
    <property type="nucleotide sequence ID" value="NC_004307.2"/>
</dbReference>
<dbReference type="RefSeq" id="WP_007053735.1">
    <property type="nucleotide sequence ID" value="NC_004307.2"/>
</dbReference>
<dbReference type="SMR" id="Q8G514"/>
<dbReference type="STRING" id="206672.BL1205"/>
<dbReference type="EnsemblBacteria" id="AAN25011">
    <property type="protein sequence ID" value="AAN25011"/>
    <property type="gene ID" value="BL1205"/>
</dbReference>
<dbReference type="KEGG" id="blo:BL1205"/>
<dbReference type="PATRIC" id="fig|206672.9.peg.920"/>
<dbReference type="HOGENOM" id="CLU_000524_4_1_11"/>
<dbReference type="OrthoDB" id="9803954at2"/>
<dbReference type="PhylomeDB" id="Q8G514"/>
<dbReference type="Proteomes" id="UP000000439">
    <property type="component" value="Chromosome"/>
</dbReference>
<dbReference type="GO" id="GO:0000428">
    <property type="term" value="C:DNA-directed RNA polymerase complex"/>
    <property type="evidence" value="ECO:0007669"/>
    <property type="project" value="UniProtKB-KW"/>
</dbReference>
<dbReference type="GO" id="GO:0003677">
    <property type="term" value="F:DNA binding"/>
    <property type="evidence" value="ECO:0007669"/>
    <property type="project" value="UniProtKB-UniRule"/>
</dbReference>
<dbReference type="GO" id="GO:0003899">
    <property type="term" value="F:DNA-directed RNA polymerase activity"/>
    <property type="evidence" value="ECO:0007669"/>
    <property type="project" value="UniProtKB-UniRule"/>
</dbReference>
<dbReference type="GO" id="GO:0032549">
    <property type="term" value="F:ribonucleoside binding"/>
    <property type="evidence" value="ECO:0007669"/>
    <property type="project" value="InterPro"/>
</dbReference>
<dbReference type="GO" id="GO:0006351">
    <property type="term" value="P:DNA-templated transcription"/>
    <property type="evidence" value="ECO:0007669"/>
    <property type="project" value="UniProtKB-UniRule"/>
</dbReference>
<dbReference type="CDD" id="cd00653">
    <property type="entry name" value="RNA_pol_B_RPB2"/>
    <property type="match status" value="1"/>
</dbReference>
<dbReference type="FunFam" id="3.90.1800.10:FF:000001">
    <property type="entry name" value="DNA-directed RNA polymerase subunit beta"/>
    <property type="match status" value="1"/>
</dbReference>
<dbReference type="Gene3D" id="2.40.50.100">
    <property type="match status" value="1"/>
</dbReference>
<dbReference type="Gene3D" id="2.40.50.150">
    <property type="match status" value="1"/>
</dbReference>
<dbReference type="Gene3D" id="3.90.1100.10">
    <property type="match status" value="1"/>
</dbReference>
<dbReference type="Gene3D" id="2.30.150.10">
    <property type="entry name" value="DNA-directed RNA polymerase, beta subunit, external 1 domain"/>
    <property type="match status" value="1"/>
</dbReference>
<dbReference type="Gene3D" id="2.40.270.10">
    <property type="entry name" value="DNA-directed RNA polymerase, subunit 2, domain 6"/>
    <property type="match status" value="1"/>
</dbReference>
<dbReference type="Gene3D" id="3.90.1800.10">
    <property type="entry name" value="RNA polymerase alpha subunit dimerisation domain"/>
    <property type="match status" value="1"/>
</dbReference>
<dbReference type="Gene3D" id="3.90.1110.10">
    <property type="entry name" value="RNA polymerase Rpb2, domain 2"/>
    <property type="match status" value="1"/>
</dbReference>
<dbReference type="HAMAP" id="MF_01321">
    <property type="entry name" value="RNApol_bact_RpoB"/>
    <property type="match status" value="1"/>
</dbReference>
<dbReference type="InterPro" id="IPR042107">
    <property type="entry name" value="DNA-dir_RNA_pol_bsu_ext_1_sf"/>
</dbReference>
<dbReference type="InterPro" id="IPR019462">
    <property type="entry name" value="DNA-dir_RNA_pol_bsu_external_1"/>
</dbReference>
<dbReference type="InterPro" id="IPR015712">
    <property type="entry name" value="DNA-dir_RNA_pol_su2"/>
</dbReference>
<dbReference type="InterPro" id="IPR007120">
    <property type="entry name" value="DNA-dir_RNAP_su2_dom"/>
</dbReference>
<dbReference type="InterPro" id="IPR037033">
    <property type="entry name" value="DNA-dir_RNAP_su2_hyb_sf"/>
</dbReference>
<dbReference type="InterPro" id="IPR010243">
    <property type="entry name" value="RNA_pol_bsu_bac"/>
</dbReference>
<dbReference type="InterPro" id="IPR007121">
    <property type="entry name" value="RNA_pol_bsu_CS"/>
</dbReference>
<dbReference type="InterPro" id="IPR007644">
    <property type="entry name" value="RNA_pol_bsu_protrusion"/>
</dbReference>
<dbReference type="InterPro" id="IPR007642">
    <property type="entry name" value="RNA_pol_Rpb2_2"/>
</dbReference>
<dbReference type="InterPro" id="IPR037034">
    <property type="entry name" value="RNA_pol_Rpb2_2_sf"/>
</dbReference>
<dbReference type="InterPro" id="IPR007645">
    <property type="entry name" value="RNA_pol_Rpb2_3"/>
</dbReference>
<dbReference type="InterPro" id="IPR007641">
    <property type="entry name" value="RNA_pol_Rpb2_7"/>
</dbReference>
<dbReference type="InterPro" id="IPR014724">
    <property type="entry name" value="RNA_pol_RPB2_OB-fold"/>
</dbReference>
<dbReference type="NCBIfam" id="NF001616">
    <property type="entry name" value="PRK00405.1"/>
    <property type="match status" value="1"/>
</dbReference>
<dbReference type="NCBIfam" id="TIGR02013">
    <property type="entry name" value="rpoB"/>
    <property type="match status" value="1"/>
</dbReference>
<dbReference type="PANTHER" id="PTHR20856">
    <property type="entry name" value="DNA-DIRECTED RNA POLYMERASE I SUBUNIT 2"/>
    <property type="match status" value="1"/>
</dbReference>
<dbReference type="Pfam" id="PF04563">
    <property type="entry name" value="RNA_pol_Rpb2_1"/>
    <property type="match status" value="1"/>
</dbReference>
<dbReference type="Pfam" id="PF04561">
    <property type="entry name" value="RNA_pol_Rpb2_2"/>
    <property type="match status" value="1"/>
</dbReference>
<dbReference type="Pfam" id="PF04565">
    <property type="entry name" value="RNA_pol_Rpb2_3"/>
    <property type="match status" value="1"/>
</dbReference>
<dbReference type="Pfam" id="PF10385">
    <property type="entry name" value="RNA_pol_Rpb2_45"/>
    <property type="match status" value="1"/>
</dbReference>
<dbReference type="Pfam" id="PF00562">
    <property type="entry name" value="RNA_pol_Rpb2_6"/>
    <property type="match status" value="1"/>
</dbReference>
<dbReference type="Pfam" id="PF04560">
    <property type="entry name" value="RNA_pol_Rpb2_7"/>
    <property type="match status" value="1"/>
</dbReference>
<dbReference type="SUPFAM" id="SSF64484">
    <property type="entry name" value="beta and beta-prime subunits of DNA dependent RNA-polymerase"/>
    <property type="match status" value="1"/>
</dbReference>
<dbReference type="PROSITE" id="PS01166">
    <property type="entry name" value="RNA_POL_BETA"/>
    <property type="match status" value="1"/>
</dbReference>